<name>EIF3L_PYRO7</name>
<gene>
    <name type="ORF">MGG_05266</name>
</gene>
<protein>
    <recommendedName>
        <fullName evidence="1">Eukaryotic translation initiation factor 3 subunit L</fullName>
        <shortName evidence="1">eIF3l</shortName>
    </recommendedName>
</protein>
<reference key="1">
    <citation type="journal article" date="2005" name="Nature">
        <title>The genome sequence of the rice blast fungus Magnaporthe grisea.</title>
        <authorList>
            <person name="Dean R.A."/>
            <person name="Talbot N.J."/>
            <person name="Ebbole D.J."/>
            <person name="Farman M.L."/>
            <person name="Mitchell T.K."/>
            <person name="Orbach M.J."/>
            <person name="Thon M.R."/>
            <person name="Kulkarni R."/>
            <person name="Xu J.-R."/>
            <person name="Pan H."/>
            <person name="Read N.D."/>
            <person name="Lee Y.-H."/>
            <person name="Carbone I."/>
            <person name="Brown D."/>
            <person name="Oh Y.Y."/>
            <person name="Donofrio N."/>
            <person name="Jeong J.S."/>
            <person name="Soanes D.M."/>
            <person name="Djonovic S."/>
            <person name="Kolomiets E."/>
            <person name="Rehmeyer C."/>
            <person name="Li W."/>
            <person name="Harding M."/>
            <person name="Kim S."/>
            <person name="Lebrun M.-H."/>
            <person name="Bohnert H."/>
            <person name="Coughlan S."/>
            <person name="Butler J."/>
            <person name="Calvo S.E."/>
            <person name="Ma L.-J."/>
            <person name="Nicol R."/>
            <person name="Purcell S."/>
            <person name="Nusbaum C."/>
            <person name="Galagan J.E."/>
            <person name="Birren B.W."/>
        </authorList>
    </citation>
    <scope>NUCLEOTIDE SEQUENCE [LARGE SCALE GENOMIC DNA]</scope>
    <source>
        <strain>70-15 / ATCC MYA-4617 / FGSC 8958</strain>
    </source>
</reference>
<keyword id="KW-0963">Cytoplasm</keyword>
<keyword id="KW-0396">Initiation factor</keyword>
<keyword id="KW-0648">Protein biosynthesis</keyword>
<keyword id="KW-1185">Reference proteome</keyword>
<comment type="function">
    <text evidence="1">Component of the eukaryotic translation initiation factor 3 (eIF-3) complex, which is involved in protein synthesis of a specialized repertoire of mRNAs and, together with other initiation factors, stimulates binding of mRNA and methionyl-tRNAi to the 40S ribosome. The eIF-3 complex specifically targets and initiates translation of a subset of mRNAs involved in cell proliferation.</text>
</comment>
<comment type="subunit">
    <text evidence="1">Component of the eukaryotic translation initiation factor 3 (eIF-3) complex.</text>
</comment>
<comment type="subcellular location">
    <subcellularLocation>
        <location evidence="1">Cytoplasm</location>
    </subcellularLocation>
</comment>
<comment type="similarity">
    <text evidence="1">Belongs to the eIF-3 subunit L family.</text>
</comment>
<accession>P0CT08</accession>
<accession>G4N5M7</accession>
<accession>Q5EN08</accession>
<organism>
    <name type="scientific">Pyricularia oryzae (strain 70-15 / ATCC MYA-4617 / FGSC 8958)</name>
    <name type="common">Rice blast fungus</name>
    <name type="synonym">Magnaporthe oryzae</name>
    <dbReference type="NCBI Taxonomy" id="242507"/>
    <lineage>
        <taxon>Eukaryota</taxon>
        <taxon>Fungi</taxon>
        <taxon>Dikarya</taxon>
        <taxon>Ascomycota</taxon>
        <taxon>Pezizomycotina</taxon>
        <taxon>Sordariomycetes</taxon>
        <taxon>Sordariomycetidae</taxon>
        <taxon>Magnaporthales</taxon>
        <taxon>Pyriculariaceae</taxon>
        <taxon>Pyricularia</taxon>
    </lineage>
</organism>
<dbReference type="EMBL" id="CM001233">
    <property type="protein sequence ID" value="EHA53017.1"/>
    <property type="molecule type" value="Genomic_DNA"/>
</dbReference>
<dbReference type="RefSeq" id="XP_003712824.1">
    <property type="nucleotide sequence ID" value="XM_003712776.1"/>
</dbReference>
<dbReference type="SMR" id="P0CT08"/>
<dbReference type="STRING" id="242507.P0CT08"/>
<dbReference type="EnsemblFungi" id="MGG_05266T0">
    <property type="protein sequence ID" value="MGG_05266T0"/>
    <property type="gene ID" value="MGG_05266"/>
</dbReference>
<dbReference type="GeneID" id="2675482"/>
<dbReference type="KEGG" id="mgr:MGG_05266"/>
<dbReference type="VEuPathDB" id="FungiDB:MGG_05266"/>
<dbReference type="eggNOG" id="KOG3677">
    <property type="taxonomic scope" value="Eukaryota"/>
</dbReference>
<dbReference type="HOGENOM" id="CLU_029210_2_0_1"/>
<dbReference type="InParanoid" id="P0CT08"/>
<dbReference type="OMA" id="AGWFIRN"/>
<dbReference type="OrthoDB" id="15082at2759"/>
<dbReference type="Proteomes" id="UP000009058">
    <property type="component" value="Chromosome 3"/>
</dbReference>
<dbReference type="GO" id="GO:0016282">
    <property type="term" value="C:eukaryotic 43S preinitiation complex"/>
    <property type="evidence" value="ECO:0007669"/>
    <property type="project" value="UniProtKB-UniRule"/>
</dbReference>
<dbReference type="GO" id="GO:0033290">
    <property type="term" value="C:eukaryotic 48S preinitiation complex"/>
    <property type="evidence" value="ECO:0007669"/>
    <property type="project" value="UniProtKB-UniRule"/>
</dbReference>
<dbReference type="GO" id="GO:0005852">
    <property type="term" value="C:eukaryotic translation initiation factor 3 complex"/>
    <property type="evidence" value="ECO:0007669"/>
    <property type="project" value="UniProtKB-UniRule"/>
</dbReference>
<dbReference type="GO" id="GO:0003743">
    <property type="term" value="F:translation initiation factor activity"/>
    <property type="evidence" value="ECO:0007669"/>
    <property type="project" value="UniProtKB-UniRule"/>
</dbReference>
<dbReference type="GO" id="GO:0001732">
    <property type="term" value="P:formation of cytoplasmic translation initiation complex"/>
    <property type="evidence" value="ECO:0007669"/>
    <property type="project" value="UniProtKB-UniRule"/>
</dbReference>
<dbReference type="HAMAP" id="MF_03011">
    <property type="entry name" value="eIF3l"/>
    <property type="match status" value="1"/>
</dbReference>
<dbReference type="InterPro" id="IPR019382">
    <property type="entry name" value="eIF3l"/>
</dbReference>
<dbReference type="InterPro" id="IPR000717">
    <property type="entry name" value="PCI_dom"/>
</dbReference>
<dbReference type="PANTHER" id="PTHR13242">
    <property type="entry name" value="EUKARYOTIC TRANSLATION INITIATION FACTOR 3"/>
    <property type="match status" value="1"/>
</dbReference>
<dbReference type="PANTHER" id="PTHR13242:SF0">
    <property type="entry name" value="EUKARYOTIC TRANSLATION INITIATION FACTOR 3 SUBUNIT L"/>
    <property type="match status" value="1"/>
</dbReference>
<dbReference type="Pfam" id="PF10255">
    <property type="entry name" value="Paf67"/>
    <property type="match status" value="1"/>
</dbReference>
<dbReference type="PROSITE" id="PS50250">
    <property type="entry name" value="PCI"/>
    <property type="match status" value="1"/>
</dbReference>
<feature type="chain" id="PRO_0000364266" description="Eukaryotic translation initiation factor 3 subunit L">
    <location>
        <begin position="1"/>
        <end position="471"/>
    </location>
</feature>
<feature type="domain" description="PCI" evidence="2">
    <location>
        <begin position="252"/>
        <end position="446"/>
    </location>
</feature>
<proteinExistence type="inferred from homology"/>
<evidence type="ECO:0000255" key="1">
    <source>
        <dbReference type="HAMAP-Rule" id="MF_03011"/>
    </source>
</evidence>
<evidence type="ECO:0000255" key="2">
    <source>
        <dbReference type="PROSITE-ProRule" id="PRU01185"/>
    </source>
</evidence>
<sequence>MSGYQNGGPRGLADDSDVEEEALVADYREQVQYEEGMDDPDMGLAQQTDDIQSRLVAAAQPLDFSAPLEVKFQSYDQYCSLFHFILNSDGPVDLEPPSYYWAWDVIDEFIYQFNSFSSYRMRIARQANNEEEAQILRENPNTWGCYSVLNVLYSLIQRSQILEQLQAMKRNEDPMAVAGDYGSRSLYRMLGYFSIIGLLRVHCLLGDFSLALRTLDDIELNKKAMFARVMAAHFTTYYYVGFSYMMVRRYADAIRMFSHILVYVSRTKNFQKNAQYDSITKKNDQMLALIAICVAFHPTRLDDTIHTALREKFGDQLLKLQRGGPESLPVYEELFRTACPKFISPVPPDFDNPEANVDPIEHHLSVFMDEVKTNMWSPTVKSYLRLYTTMDLKKLAGFLSVKPEELRSWLLVNKQRTKQLRWADHGLLDGELVNVSDLDYAMQGDLIHISEAKVGRKLVDWYLRNLSRTYV</sequence>